<comment type="subcellular location">
    <subcellularLocation>
        <location evidence="2">Cytoplasm</location>
    </subcellularLocation>
    <subcellularLocation>
        <location evidence="2">Nucleus</location>
    </subcellularLocation>
</comment>
<comment type="similarity">
    <text evidence="3">Belongs to the carbon-nitrogen hydrolase superfamily. NIT1/NIT2 family.</text>
</comment>
<feature type="chain" id="PRO_0000314762" description="Probable hydrolase nit2">
    <location>
        <begin position="1"/>
        <end position="276"/>
    </location>
</feature>
<feature type="domain" description="CN hydrolase" evidence="1">
    <location>
        <begin position="1"/>
        <end position="254"/>
    </location>
</feature>
<feature type="active site" description="Proton acceptor" evidence="1">
    <location>
        <position position="41"/>
    </location>
</feature>
<feature type="active site" description="Proton donor" evidence="1">
    <location>
        <position position="114"/>
    </location>
</feature>
<feature type="active site" description="Nucleophile" evidence="1">
    <location>
        <position position="156"/>
    </location>
</feature>
<accession>O94660</accession>
<proteinExistence type="inferred from homology"/>
<protein>
    <recommendedName>
        <fullName>Probable hydrolase nit2</fullName>
        <ecNumber>3.5.-.-</ecNumber>
    </recommendedName>
</protein>
<gene>
    <name type="primary">nit2</name>
    <name type="ORF">SPBC651.02</name>
</gene>
<sequence length="276" mass="30421">MTLAAVAQLNSSGSILKNLAICKELISQAAAKGAKCIFFPEASDFIAHNSDEAIELTNHPDCSKFIRDVRESATKHSIFVNICVHEPSKVKNKLLNSSLFIEPLHGEIISRYSKAHLFDVEIKNGPTLKESNTTLRGEAILPPCKTPLGKVGSAICFDIRFPEQAIKLRNMGAHIITYPSAFTEKTGAAHWEVLLRARALDSQCYVIAPAQGGKHNEKRASYGHSMIVDPWGTVIAQYSDISSPNGLIFADLDLNLVDHVRTYIPLLRRNDLYPTI</sequence>
<evidence type="ECO:0000255" key="1">
    <source>
        <dbReference type="PROSITE-ProRule" id="PRU00054"/>
    </source>
</evidence>
<evidence type="ECO:0000269" key="2">
    <source>
    </source>
</evidence>
<evidence type="ECO:0000305" key="3"/>
<dbReference type="EC" id="3.5.-.-"/>
<dbReference type="EMBL" id="CU329671">
    <property type="protein sequence ID" value="CAB37598.1"/>
    <property type="molecule type" value="Genomic_DNA"/>
</dbReference>
<dbReference type="PIR" id="T40601">
    <property type="entry name" value="T40601"/>
</dbReference>
<dbReference type="SMR" id="O94660"/>
<dbReference type="BioGRID" id="277642">
    <property type="interactions" value="3"/>
</dbReference>
<dbReference type="FunCoup" id="O94660">
    <property type="interactions" value="72"/>
</dbReference>
<dbReference type="STRING" id="284812.O94660"/>
<dbReference type="PaxDb" id="4896-SPBC651.02.1"/>
<dbReference type="EnsemblFungi" id="SPBC651.02.1">
    <property type="protein sequence ID" value="SPBC651.02.1:pep"/>
    <property type="gene ID" value="SPBC651.02"/>
</dbReference>
<dbReference type="KEGG" id="spo:2541127"/>
<dbReference type="PomBase" id="SPBC651.02"/>
<dbReference type="VEuPathDB" id="FungiDB:SPBC651.02"/>
<dbReference type="eggNOG" id="KOG0807">
    <property type="taxonomic scope" value="Eukaryota"/>
</dbReference>
<dbReference type="HOGENOM" id="CLU_030130_1_2_1"/>
<dbReference type="InParanoid" id="O94660"/>
<dbReference type="OMA" id="MRVAVCQ"/>
<dbReference type="PhylomeDB" id="O94660"/>
<dbReference type="PRO" id="PR:O94660"/>
<dbReference type="Proteomes" id="UP000002485">
    <property type="component" value="Chromosome II"/>
</dbReference>
<dbReference type="GO" id="GO:0005829">
    <property type="term" value="C:cytosol"/>
    <property type="evidence" value="ECO:0007005"/>
    <property type="project" value="PomBase"/>
</dbReference>
<dbReference type="GO" id="GO:0005634">
    <property type="term" value="C:nucleus"/>
    <property type="evidence" value="ECO:0007005"/>
    <property type="project" value="PomBase"/>
</dbReference>
<dbReference type="GO" id="GO:0047710">
    <property type="term" value="F:bis(5'-adenosyl)-triphosphatase activity"/>
    <property type="evidence" value="ECO:0000266"/>
    <property type="project" value="PomBase"/>
</dbReference>
<dbReference type="GO" id="GO:0016811">
    <property type="term" value="F:hydrolase activity, acting on carbon-nitrogen (but not peptide) bonds, in linear amides"/>
    <property type="evidence" value="ECO:0007669"/>
    <property type="project" value="InterPro"/>
</dbReference>
<dbReference type="GO" id="GO:0015964">
    <property type="term" value="P:diadenosine triphosphate catabolic process"/>
    <property type="evidence" value="ECO:0000305"/>
    <property type="project" value="PomBase"/>
</dbReference>
<dbReference type="CDD" id="cd07572">
    <property type="entry name" value="nit"/>
    <property type="match status" value="1"/>
</dbReference>
<dbReference type="FunFam" id="3.60.110.10:FF:000024">
    <property type="entry name" value="Deaminated glutathione amidase"/>
    <property type="match status" value="1"/>
</dbReference>
<dbReference type="Gene3D" id="3.60.110.10">
    <property type="entry name" value="Carbon-nitrogen hydrolase"/>
    <property type="match status" value="1"/>
</dbReference>
<dbReference type="InterPro" id="IPR003010">
    <property type="entry name" value="C-N_Hydrolase"/>
</dbReference>
<dbReference type="InterPro" id="IPR036526">
    <property type="entry name" value="C-N_Hydrolase_sf"/>
</dbReference>
<dbReference type="InterPro" id="IPR045254">
    <property type="entry name" value="Nit1/2_C-N_Hydrolase"/>
</dbReference>
<dbReference type="PANTHER" id="PTHR23088:SF27">
    <property type="entry name" value="DEAMINATED GLUTATHIONE AMIDASE"/>
    <property type="match status" value="1"/>
</dbReference>
<dbReference type="PANTHER" id="PTHR23088">
    <property type="entry name" value="NITRILASE-RELATED"/>
    <property type="match status" value="1"/>
</dbReference>
<dbReference type="Pfam" id="PF00795">
    <property type="entry name" value="CN_hydrolase"/>
    <property type="match status" value="1"/>
</dbReference>
<dbReference type="SUPFAM" id="SSF56317">
    <property type="entry name" value="Carbon-nitrogen hydrolase"/>
    <property type="match status" value="1"/>
</dbReference>
<dbReference type="PROSITE" id="PS50263">
    <property type="entry name" value="CN_HYDROLASE"/>
    <property type="match status" value="1"/>
</dbReference>
<keyword id="KW-0963">Cytoplasm</keyword>
<keyword id="KW-0378">Hydrolase</keyword>
<keyword id="KW-0539">Nucleus</keyword>
<keyword id="KW-1185">Reference proteome</keyword>
<name>NIT2_SCHPO</name>
<organism>
    <name type="scientific">Schizosaccharomyces pombe (strain 972 / ATCC 24843)</name>
    <name type="common">Fission yeast</name>
    <dbReference type="NCBI Taxonomy" id="284812"/>
    <lineage>
        <taxon>Eukaryota</taxon>
        <taxon>Fungi</taxon>
        <taxon>Dikarya</taxon>
        <taxon>Ascomycota</taxon>
        <taxon>Taphrinomycotina</taxon>
        <taxon>Schizosaccharomycetes</taxon>
        <taxon>Schizosaccharomycetales</taxon>
        <taxon>Schizosaccharomycetaceae</taxon>
        <taxon>Schizosaccharomyces</taxon>
    </lineage>
</organism>
<reference key="1">
    <citation type="journal article" date="2002" name="Nature">
        <title>The genome sequence of Schizosaccharomyces pombe.</title>
        <authorList>
            <person name="Wood V."/>
            <person name="Gwilliam R."/>
            <person name="Rajandream M.A."/>
            <person name="Lyne M.H."/>
            <person name="Lyne R."/>
            <person name="Stewart A."/>
            <person name="Sgouros J.G."/>
            <person name="Peat N."/>
            <person name="Hayles J."/>
            <person name="Baker S.G."/>
            <person name="Basham D."/>
            <person name="Bowman S."/>
            <person name="Brooks K."/>
            <person name="Brown D."/>
            <person name="Brown S."/>
            <person name="Chillingworth T."/>
            <person name="Churcher C.M."/>
            <person name="Collins M."/>
            <person name="Connor R."/>
            <person name="Cronin A."/>
            <person name="Davis P."/>
            <person name="Feltwell T."/>
            <person name="Fraser A."/>
            <person name="Gentles S."/>
            <person name="Goble A."/>
            <person name="Hamlin N."/>
            <person name="Harris D.E."/>
            <person name="Hidalgo J."/>
            <person name="Hodgson G."/>
            <person name="Holroyd S."/>
            <person name="Hornsby T."/>
            <person name="Howarth S."/>
            <person name="Huckle E.J."/>
            <person name="Hunt S."/>
            <person name="Jagels K."/>
            <person name="James K.D."/>
            <person name="Jones L."/>
            <person name="Jones M."/>
            <person name="Leather S."/>
            <person name="McDonald S."/>
            <person name="McLean J."/>
            <person name="Mooney P."/>
            <person name="Moule S."/>
            <person name="Mungall K.L."/>
            <person name="Murphy L.D."/>
            <person name="Niblett D."/>
            <person name="Odell C."/>
            <person name="Oliver K."/>
            <person name="O'Neil S."/>
            <person name="Pearson D."/>
            <person name="Quail M.A."/>
            <person name="Rabbinowitsch E."/>
            <person name="Rutherford K.M."/>
            <person name="Rutter S."/>
            <person name="Saunders D."/>
            <person name="Seeger K."/>
            <person name="Sharp S."/>
            <person name="Skelton J."/>
            <person name="Simmonds M.N."/>
            <person name="Squares R."/>
            <person name="Squares S."/>
            <person name="Stevens K."/>
            <person name="Taylor K."/>
            <person name="Taylor R.G."/>
            <person name="Tivey A."/>
            <person name="Walsh S.V."/>
            <person name="Warren T."/>
            <person name="Whitehead S."/>
            <person name="Woodward J.R."/>
            <person name="Volckaert G."/>
            <person name="Aert R."/>
            <person name="Robben J."/>
            <person name="Grymonprez B."/>
            <person name="Weltjens I."/>
            <person name="Vanstreels E."/>
            <person name="Rieger M."/>
            <person name="Schaefer M."/>
            <person name="Mueller-Auer S."/>
            <person name="Gabel C."/>
            <person name="Fuchs M."/>
            <person name="Duesterhoeft A."/>
            <person name="Fritzc C."/>
            <person name="Holzer E."/>
            <person name="Moestl D."/>
            <person name="Hilbert H."/>
            <person name="Borzym K."/>
            <person name="Langer I."/>
            <person name="Beck A."/>
            <person name="Lehrach H."/>
            <person name="Reinhardt R."/>
            <person name="Pohl T.M."/>
            <person name="Eger P."/>
            <person name="Zimmermann W."/>
            <person name="Wedler H."/>
            <person name="Wambutt R."/>
            <person name="Purnelle B."/>
            <person name="Goffeau A."/>
            <person name="Cadieu E."/>
            <person name="Dreano S."/>
            <person name="Gloux S."/>
            <person name="Lelaure V."/>
            <person name="Mottier S."/>
            <person name="Galibert F."/>
            <person name="Aves S.J."/>
            <person name="Xiang Z."/>
            <person name="Hunt C."/>
            <person name="Moore K."/>
            <person name="Hurst S.M."/>
            <person name="Lucas M."/>
            <person name="Rochet M."/>
            <person name="Gaillardin C."/>
            <person name="Tallada V.A."/>
            <person name="Garzon A."/>
            <person name="Thode G."/>
            <person name="Daga R.R."/>
            <person name="Cruzado L."/>
            <person name="Jimenez J."/>
            <person name="Sanchez M."/>
            <person name="del Rey F."/>
            <person name="Benito J."/>
            <person name="Dominguez A."/>
            <person name="Revuelta J.L."/>
            <person name="Moreno S."/>
            <person name="Armstrong J."/>
            <person name="Forsburg S.L."/>
            <person name="Cerutti L."/>
            <person name="Lowe T."/>
            <person name="McCombie W.R."/>
            <person name="Paulsen I."/>
            <person name="Potashkin J."/>
            <person name="Shpakovski G.V."/>
            <person name="Ussery D."/>
            <person name="Barrell B.G."/>
            <person name="Nurse P."/>
        </authorList>
    </citation>
    <scope>NUCLEOTIDE SEQUENCE [LARGE SCALE GENOMIC DNA]</scope>
    <source>
        <strain>972 / ATCC 24843</strain>
    </source>
</reference>
<reference key="2">
    <citation type="journal article" date="2006" name="Nat. Biotechnol.">
        <title>ORFeome cloning and global analysis of protein localization in the fission yeast Schizosaccharomyces pombe.</title>
        <authorList>
            <person name="Matsuyama A."/>
            <person name="Arai R."/>
            <person name="Yashiroda Y."/>
            <person name="Shirai A."/>
            <person name="Kamata A."/>
            <person name="Sekido S."/>
            <person name="Kobayashi Y."/>
            <person name="Hashimoto A."/>
            <person name="Hamamoto M."/>
            <person name="Hiraoka Y."/>
            <person name="Horinouchi S."/>
            <person name="Yoshida M."/>
        </authorList>
    </citation>
    <scope>SUBCELLULAR LOCATION [LARGE SCALE ANALYSIS]</scope>
</reference>